<feature type="chain" id="PRO_1000201157" description="Phosphoglucosamine mutase">
    <location>
        <begin position="1"/>
        <end position="446"/>
    </location>
</feature>
<feature type="active site" description="Phosphoserine intermediate" evidence="1">
    <location>
        <position position="102"/>
    </location>
</feature>
<feature type="binding site" description="via phosphate group" evidence="1">
    <location>
        <position position="102"/>
    </location>
    <ligand>
        <name>Mg(2+)</name>
        <dbReference type="ChEBI" id="CHEBI:18420"/>
    </ligand>
</feature>
<feature type="binding site" evidence="1">
    <location>
        <position position="241"/>
    </location>
    <ligand>
        <name>Mg(2+)</name>
        <dbReference type="ChEBI" id="CHEBI:18420"/>
    </ligand>
</feature>
<feature type="binding site" evidence="1">
    <location>
        <position position="243"/>
    </location>
    <ligand>
        <name>Mg(2+)</name>
        <dbReference type="ChEBI" id="CHEBI:18420"/>
    </ligand>
</feature>
<feature type="binding site" evidence="1">
    <location>
        <position position="245"/>
    </location>
    <ligand>
        <name>Mg(2+)</name>
        <dbReference type="ChEBI" id="CHEBI:18420"/>
    </ligand>
</feature>
<feature type="modified residue" description="Phosphoserine" evidence="1">
    <location>
        <position position="102"/>
    </location>
</feature>
<evidence type="ECO:0000255" key="1">
    <source>
        <dbReference type="HAMAP-Rule" id="MF_01554"/>
    </source>
</evidence>
<accession>B2K2Q1</accession>
<sequence length="446" mass="47898">MSNRKYFGTDGIRGKVGESPITPDFVLKLGWAAGKVLARHGSRKIIIGKDTRISGYMLESALEAGLAAAGLSALFTGPMPTPAVAYLTRTFRAEAGIVISASHNPFYDNGIKFFSIDGTKLPDDVEEAIEAEMEKPLTCVESAELGKANRIVDAAGRYIEFCKGTFPSELSLNELKIVVDCANGATYHIAPSVLRELGATVITIGCEPDGMNINEECGATDVRLLQERVLAEGAHVGLAFDGDGDRLMMVDHLGNKVDGDQILYIIAREGLRQGQLKGGAVGTLMSNMGLQLALKDLGIPFVRAKVGDRYVLEAMQEKGWRIGAENSGHVILLDKTTTGDGIVAGLQVLTAMVRNHMSLHDLCSGMKLLPQILVNVRFSGEHNPLKSDEVEEVTRQVEKELGGRGRVLLRKSGTEPLIRVMVEGDAEESLIAEMANRIADAVKAAG</sequence>
<proteinExistence type="inferred from homology"/>
<protein>
    <recommendedName>
        <fullName evidence="1">Phosphoglucosamine mutase</fullName>
        <ecNumber evidence="1">5.4.2.10</ecNumber>
    </recommendedName>
</protein>
<keyword id="KW-0413">Isomerase</keyword>
<keyword id="KW-0460">Magnesium</keyword>
<keyword id="KW-0479">Metal-binding</keyword>
<keyword id="KW-0597">Phosphoprotein</keyword>
<reference key="1">
    <citation type="submission" date="2008-04" db="EMBL/GenBank/DDBJ databases">
        <title>Complete sequence of Yersinia pseudotuberculosis PB1/+.</title>
        <authorList>
            <person name="Copeland A."/>
            <person name="Lucas S."/>
            <person name="Lapidus A."/>
            <person name="Glavina del Rio T."/>
            <person name="Dalin E."/>
            <person name="Tice H."/>
            <person name="Bruce D."/>
            <person name="Goodwin L."/>
            <person name="Pitluck S."/>
            <person name="Munk A.C."/>
            <person name="Brettin T."/>
            <person name="Detter J.C."/>
            <person name="Han C."/>
            <person name="Tapia R."/>
            <person name="Schmutz J."/>
            <person name="Larimer F."/>
            <person name="Land M."/>
            <person name="Hauser L."/>
            <person name="Challacombe J.F."/>
            <person name="Green L."/>
            <person name="Lindler L.E."/>
            <person name="Nikolich M.P."/>
            <person name="Richardson P."/>
        </authorList>
    </citation>
    <scope>NUCLEOTIDE SEQUENCE [LARGE SCALE GENOMIC DNA]</scope>
    <source>
        <strain>PB1/+</strain>
    </source>
</reference>
<organism>
    <name type="scientific">Yersinia pseudotuberculosis serotype IB (strain PB1/+)</name>
    <dbReference type="NCBI Taxonomy" id="502801"/>
    <lineage>
        <taxon>Bacteria</taxon>
        <taxon>Pseudomonadati</taxon>
        <taxon>Pseudomonadota</taxon>
        <taxon>Gammaproteobacteria</taxon>
        <taxon>Enterobacterales</taxon>
        <taxon>Yersiniaceae</taxon>
        <taxon>Yersinia</taxon>
    </lineage>
</organism>
<dbReference type="EC" id="5.4.2.10" evidence="1"/>
<dbReference type="EMBL" id="CP001048">
    <property type="protein sequence ID" value="ACC87492.1"/>
    <property type="molecule type" value="Genomic_DNA"/>
</dbReference>
<dbReference type="RefSeq" id="WP_002210189.1">
    <property type="nucleotide sequence ID" value="NZ_CP009780.1"/>
</dbReference>
<dbReference type="SMR" id="B2K2Q1"/>
<dbReference type="GeneID" id="57975214"/>
<dbReference type="KEGG" id="ypb:YPTS_0506"/>
<dbReference type="PATRIC" id="fig|502801.10.peg.4180"/>
<dbReference type="GO" id="GO:0005829">
    <property type="term" value="C:cytosol"/>
    <property type="evidence" value="ECO:0007669"/>
    <property type="project" value="TreeGrafter"/>
</dbReference>
<dbReference type="GO" id="GO:0000287">
    <property type="term" value="F:magnesium ion binding"/>
    <property type="evidence" value="ECO:0007669"/>
    <property type="project" value="UniProtKB-UniRule"/>
</dbReference>
<dbReference type="GO" id="GO:0008966">
    <property type="term" value="F:phosphoglucosamine mutase activity"/>
    <property type="evidence" value="ECO:0007669"/>
    <property type="project" value="UniProtKB-UniRule"/>
</dbReference>
<dbReference type="GO" id="GO:0004615">
    <property type="term" value="F:phosphomannomutase activity"/>
    <property type="evidence" value="ECO:0007669"/>
    <property type="project" value="TreeGrafter"/>
</dbReference>
<dbReference type="GO" id="GO:0005975">
    <property type="term" value="P:carbohydrate metabolic process"/>
    <property type="evidence" value="ECO:0007669"/>
    <property type="project" value="InterPro"/>
</dbReference>
<dbReference type="GO" id="GO:0009252">
    <property type="term" value="P:peptidoglycan biosynthetic process"/>
    <property type="evidence" value="ECO:0007669"/>
    <property type="project" value="TreeGrafter"/>
</dbReference>
<dbReference type="GO" id="GO:0006048">
    <property type="term" value="P:UDP-N-acetylglucosamine biosynthetic process"/>
    <property type="evidence" value="ECO:0007669"/>
    <property type="project" value="TreeGrafter"/>
</dbReference>
<dbReference type="CDD" id="cd05802">
    <property type="entry name" value="GlmM"/>
    <property type="match status" value="1"/>
</dbReference>
<dbReference type="FunFam" id="3.30.310.50:FF:000001">
    <property type="entry name" value="Phosphoglucosamine mutase"/>
    <property type="match status" value="1"/>
</dbReference>
<dbReference type="FunFam" id="3.40.120.10:FF:000001">
    <property type="entry name" value="Phosphoglucosamine mutase"/>
    <property type="match status" value="1"/>
</dbReference>
<dbReference type="FunFam" id="3.40.120.10:FF:000002">
    <property type="entry name" value="Phosphoglucosamine mutase"/>
    <property type="match status" value="1"/>
</dbReference>
<dbReference type="Gene3D" id="3.40.120.10">
    <property type="entry name" value="Alpha-D-Glucose-1,6-Bisphosphate, subunit A, domain 3"/>
    <property type="match status" value="3"/>
</dbReference>
<dbReference type="Gene3D" id="3.30.310.50">
    <property type="entry name" value="Alpha-D-phosphohexomutase, C-terminal domain"/>
    <property type="match status" value="1"/>
</dbReference>
<dbReference type="HAMAP" id="MF_01554_B">
    <property type="entry name" value="GlmM_B"/>
    <property type="match status" value="1"/>
</dbReference>
<dbReference type="InterPro" id="IPR005844">
    <property type="entry name" value="A-D-PHexomutase_a/b/a-I"/>
</dbReference>
<dbReference type="InterPro" id="IPR016055">
    <property type="entry name" value="A-D-PHexomutase_a/b/a-I/II/III"/>
</dbReference>
<dbReference type="InterPro" id="IPR005845">
    <property type="entry name" value="A-D-PHexomutase_a/b/a-II"/>
</dbReference>
<dbReference type="InterPro" id="IPR005846">
    <property type="entry name" value="A-D-PHexomutase_a/b/a-III"/>
</dbReference>
<dbReference type="InterPro" id="IPR005843">
    <property type="entry name" value="A-D-PHexomutase_C"/>
</dbReference>
<dbReference type="InterPro" id="IPR036900">
    <property type="entry name" value="A-D-PHexomutase_C_sf"/>
</dbReference>
<dbReference type="InterPro" id="IPR016066">
    <property type="entry name" value="A-D-PHexomutase_CS"/>
</dbReference>
<dbReference type="InterPro" id="IPR005841">
    <property type="entry name" value="Alpha-D-phosphohexomutase_SF"/>
</dbReference>
<dbReference type="InterPro" id="IPR006352">
    <property type="entry name" value="GlmM_bact"/>
</dbReference>
<dbReference type="InterPro" id="IPR050060">
    <property type="entry name" value="Phosphoglucosamine_mutase"/>
</dbReference>
<dbReference type="NCBIfam" id="TIGR01455">
    <property type="entry name" value="glmM"/>
    <property type="match status" value="1"/>
</dbReference>
<dbReference type="NCBIfam" id="NF008139">
    <property type="entry name" value="PRK10887.1"/>
    <property type="match status" value="1"/>
</dbReference>
<dbReference type="PANTHER" id="PTHR42946:SF1">
    <property type="entry name" value="PHOSPHOGLUCOMUTASE (ALPHA-D-GLUCOSE-1,6-BISPHOSPHATE-DEPENDENT)"/>
    <property type="match status" value="1"/>
</dbReference>
<dbReference type="PANTHER" id="PTHR42946">
    <property type="entry name" value="PHOSPHOHEXOSE MUTASE"/>
    <property type="match status" value="1"/>
</dbReference>
<dbReference type="Pfam" id="PF02878">
    <property type="entry name" value="PGM_PMM_I"/>
    <property type="match status" value="1"/>
</dbReference>
<dbReference type="Pfam" id="PF02879">
    <property type="entry name" value="PGM_PMM_II"/>
    <property type="match status" value="1"/>
</dbReference>
<dbReference type="Pfam" id="PF02880">
    <property type="entry name" value="PGM_PMM_III"/>
    <property type="match status" value="1"/>
</dbReference>
<dbReference type="Pfam" id="PF00408">
    <property type="entry name" value="PGM_PMM_IV"/>
    <property type="match status" value="1"/>
</dbReference>
<dbReference type="PRINTS" id="PR00509">
    <property type="entry name" value="PGMPMM"/>
</dbReference>
<dbReference type="SUPFAM" id="SSF55957">
    <property type="entry name" value="Phosphoglucomutase, C-terminal domain"/>
    <property type="match status" value="1"/>
</dbReference>
<dbReference type="SUPFAM" id="SSF53738">
    <property type="entry name" value="Phosphoglucomutase, first 3 domains"/>
    <property type="match status" value="3"/>
</dbReference>
<dbReference type="PROSITE" id="PS00710">
    <property type="entry name" value="PGM_PMM"/>
    <property type="match status" value="1"/>
</dbReference>
<gene>
    <name evidence="1" type="primary">glmM</name>
    <name type="ordered locus">YPTS_0506</name>
</gene>
<comment type="function">
    <text evidence="1">Catalyzes the conversion of glucosamine-6-phosphate to glucosamine-1-phosphate.</text>
</comment>
<comment type="catalytic activity">
    <reaction evidence="1">
        <text>alpha-D-glucosamine 1-phosphate = D-glucosamine 6-phosphate</text>
        <dbReference type="Rhea" id="RHEA:23424"/>
        <dbReference type="ChEBI" id="CHEBI:58516"/>
        <dbReference type="ChEBI" id="CHEBI:58725"/>
        <dbReference type="EC" id="5.4.2.10"/>
    </reaction>
</comment>
<comment type="cofactor">
    <cofactor evidence="1">
        <name>Mg(2+)</name>
        <dbReference type="ChEBI" id="CHEBI:18420"/>
    </cofactor>
    <text evidence="1">Binds 1 Mg(2+) ion per subunit.</text>
</comment>
<comment type="PTM">
    <text evidence="1">Activated by phosphorylation.</text>
</comment>
<comment type="similarity">
    <text evidence="1">Belongs to the phosphohexose mutase family.</text>
</comment>
<name>GLMM_YERPB</name>